<evidence type="ECO:0000255" key="1">
    <source>
        <dbReference type="HAMAP-Rule" id="MF_00384"/>
    </source>
</evidence>
<reference key="1">
    <citation type="journal article" date="2009" name="Appl. Environ. Microbiol.">
        <title>Three genomes from the phylum Acidobacteria provide insight into the lifestyles of these microorganisms in soils.</title>
        <authorList>
            <person name="Ward N.L."/>
            <person name="Challacombe J.F."/>
            <person name="Janssen P.H."/>
            <person name="Henrissat B."/>
            <person name="Coutinho P.M."/>
            <person name="Wu M."/>
            <person name="Xie G."/>
            <person name="Haft D.H."/>
            <person name="Sait M."/>
            <person name="Badger J."/>
            <person name="Barabote R.D."/>
            <person name="Bradley B."/>
            <person name="Brettin T.S."/>
            <person name="Brinkac L.M."/>
            <person name="Bruce D."/>
            <person name="Creasy T."/>
            <person name="Daugherty S.C."/>
            <person name="Davidsen T.M."/>
            <person name="DeBoy R.T."/>
            <person name="Detter J.C."/>
            <person name="Dodson R.J."/>
            <person name="Durkin A.S."/>
            <person name="Ganapathy A."/>
            <person name="Gwinn-Giglio M."/>
            <person name="Han C.S."/>
            <person name="Khouri H."/>
            <person name="Kiss H."/>
            <person name="Kothari S.P."/>
            <person name="Madupu R."/>
            <person name="Nelson K.E."/>
            <person name="Nelson W.C."/>
            <person name="Paulsen I."/>
            <person name="Penn K."/>
            <person name="Ren Q."/>
            <person name="Rosovitz M.J."/>
            <person name="Selengut J.D."/>
            <person name="Shrivastava S."/>
            <person name="Sullivan S.A."/>
            <person name="Tapia R."/>
            <person name="Thompson L.S."/>
            <person name="Watkins K.L."/>
            <person name="Yang Q."/>
            <person name="Yu C."/>
            <person name="Zafar N."/>
            <person name="Zhou L."/>
            <person name="Kuske C.R."/>
        </authorList>
    </citation>
    <scope>NUCLEOTIDE SEQUENCE [LARGE SCALE GENOMIC DNA]</scope>
    <source>
        <strain>Ellin6076</strain>
    </source>
</reference>
<keyword id="KW-0028">Amino-acid biosynthesis</keyword>
<keyword id="KW-0067">ATP-binding</keyword>
<keyword id="KW-0963">Cytoplasm</keyword>
<keyword id="KW-0418">Kinase</keyword>
<keyword id="KW-0547">Nucleotide-binding</keyword>
<keyword id="KW-0791">Threonine biosynthesis</keyword>
<keyword id="KW-0808">Transferase</keyword>
<organism>
    <name type="scientific">Solibacter usitatus (strain Ellin6076)</name>
    <dbReference type="NCBI Taxonomy" id="234267"/>
    <lineage>
        <taxon>Bacteria</taxon>
        <taxon>Pseudomonadati</taxon>
        <taxon>Acidobacteriota</taxon>
        <taxon>Terriglobia</taxon>
        <taxon>Bryobacterales</taxon>
        <taxon>Solibacteraceae</taxon>
        <taxon>Candidatus Solibacter</taxon>
    </lineage>
</organism>
<accession>Q02AL5</accession>
<protein>
    <recommendedName>
        <fullName evidence="1">Homoserine kinase</fullName>
        <shortName evidence="1">HK</shortName>
        <shortName evidence="1">HSK</shortName>
        <ecNumber evidence="1">2.7.1.39</ecNumber>
    </recommendedName>
</protein>
<dbReference type="EC" id="2.7.1.39" evidence="1"/>
<dbReference type="EMBL" id="CP000473">
    <property type="protein sequence ID" value="ABJ81901.1"/>
    <property type="molecule type" value="Genomic_DNA"/>
</dbReference>
<dbReference type="SMR" id="Q02AL5"/>
<dbReference type="FunCoup" id="Q02AL5">
    <property type="interactions" value="469"/>
</dbReference>
<dbReference type="STRING" id="234267.Acid_0902"/>
<dbReference type="KEGG" id="sus:Acid_0902"/>
<dbReference type="eggNOG" id="COG0083">
    <property type="taxonomic scope" value="Bacteria"/>
</dbReference>
<dbReference type="HOGENOM" id="CLU_041243_0_2_0"/>
<dbReference type="InParanoid" id="Q02AL5"/>
<dbReference type="OrthoDB" id="9769912at2"/>
<dbReference type="UniPathway" id="UPA00050">
    <property type="reaction ID" value="UER00064"/>
</dbReference>
<dbReference type="GO" id="GO:0005737">
    <property type="term" value="C:cytoplasm"/>
    <property type="evidence" value="ECO:0007669"/>
    <property type="project" value="UniProtKB-SubCell"/>
</dbReference>
<dbReference type="GO" id="GO:0005524">
    <property type="term" value="F:ATP binding"/>
    <property type="evidence" value="ECO:0007669"/>
    <property type="project" value="UniProtKB-UniRule"/>
</dbReference>
<dbReference type="GO" id="GO:0004413">
    <property type="term" value="F:homoserine kinase activity"/>
    <property type="evidence" value="ECO:0007669"/>
    <property type="project" value="UniProtKB-UniRule"/>
</dbReference>
<dbReference type="GO" id="GO:0009088">
    <property type="term" value="P:threonine biosynthetic process"/>
    <property type="evidence" value="ECO:0007669"/>
    <property type="project" value="UniProtKB-UniRule"/>
</dbReference>
<dbReference type="Gene3D" id="3.30.230.10">
    <property type="match status" value="1"/>
</dbReference>
<dbReference type="Gene3D" id="3.30.70.890">
    <property type="entry name" value="GHMP kinase, C-terminal domain"/>
    <property type="match status" value="1"/>
</dbReference>
<dbReference type="HAMAP" id="MF_00384">
    <property type="entry name" value="Homoser_kinase"/>
    <property type="match status" value="1"/>
</dbReference>
<dbReference type="InterPro" id="IPR013750">
    <property type="entry name" value="GHMP_kinase_C_dom"/>
</dbReference>
<dbReference type="InterPro" id="IPR036554">
    <property type="entry name" value="GHMP_kinase_C_sf"/>
</dbReference>
<dbReference type="InterPro" id="IPR006204">
    <property type="entry name" value="GHMP_kinase_N_dom"/>
</dbReference>
<dbReference type="InterPro" id="IPR006203">
    <property type="entry name" value="GHMP_knse_ATP-bd_CS"/>
</dbReference>
<dbReference type="InterPro" id="IPR000870">
    <property type="entry name" value="Homoserine_kinase"/>
</dbReference>
<dbReference type="InterPro" id="IPR020568">
    <property type="entry name" value="Ribosomal_Su5_D2-typ_SF"/>
</dbReference>
<dbReference type="InterPro" id="IPR014721">
    <property type="entry name" value="Ribsml_uS5_D2-typ_fold_subgr"/>
</dbReference>
<dbReference type="NCBIfam" id="TIGR00191">
    <property type="entry name" value="thrB"/>
    <property type="match status" value="1"/>
</dbReference>
<dbReference type="PANTHER" id="PTHR20861:SF1">
    <property type="entry name" value="HOMOSERINE KINASE"/>
    <property type="match status" value="1"/>
</dbReference>
<dbReference type="PANTHER" id="PTHR20861">
    <property type="entry name" value="HOMOSERINE/4-DIPHOSPHOCYTIDYL-2-C-METHYL-D-ERYTHRITOL KINASE"/>
    <property type="match status" value="1"/>
</dbReference>
<dbReference type="Pfam" id="PF08544">
    <property type="entry name" value="GHMP_kinases_C"/>
    <property type="match status" value="1"/>
</dbReference>
<dbReference type="Pfam" id="PF00288">
    <property type="entry name" value="GHMP_kinases_N"/>
    <property type="match status" value="1"/>
</dbReference>
<dbReference type="PIRSF" id="PIRSF000676">
    <property type="entry name" value="Homoser_kin"/>
    <property type="match status" value="1"/>
</dbReference>
<dbReference type="PRINTS" id="PR00958">
    <property type="entry name" value="HOMSERKINASE"/>
</dbReference>
<dbReference type="SUPFAM" id="SSF55060">
    <property type="entry name" value="GHMP Kinase, C-terminal domain"/>
    <property type="match status" value="1"/>
</dbReference>
<dbReference type="SUPFAM" id="SSF54211">
    <property type="entry name" value="Ribosomal protein S5 domain 2-like"/>
    <property type="match status" value="1"/>
</dbReference>
<dbReference type="PROSITE" id="PS00627">
    <property type="entry name" value="GHMP_KINASES_ATP"/>
    <property type="match status" value="1"/>
</dbReference>
<sequence length="304" mass="32305">MSASNSWFHLKVPASSANLGPGFDALGLALGVYLTCRFRHSATLSITAAGRDACGIPASPDNLIWQTALTVARNQRMTMPPIELEIHNEIPLGKGMGSSAAALTAGVVIADELLDLGWKPLRILDEAARLEGHPDNVAPCTLGSIVASAIDSGGVTRAVRLPLPKSFDLAIVVPDFDLPTAKARAVLPSGYSREDAVFNVQRAALLIAALATGTTNVFPAAIEDRFHQPYREALVPGLHEILRLRAPGLLGCALSGAGPSILVFFERGYESVCELVEQIFRLNGHASETLHCSIPERGFELTRA</sequence>
<proteinExistence type="inferred from homology"/>
<feature type="chain" id="PRO_1000049168" description="Homoserine kinase">
    <location>
        <begin position="1"/>
        <end position="304"/>
    </location>
</feature>
<feature type="binding site" evidence="1">
    <location>
        <begin position="91"/>
        <end position="101"/>
    </location>
    <ligand>
        <name>ATP</name>
        <dbReference type="ChEBI" id="CHEBI:30616"/>
    </ligand>
</feature>
<comment type="function">
    <text evidence="1">Catalyzes the ATP-dependent phosphorylation of L-homoserine to L-homoserine phosphate.</text>
</comment>
<comment type="catalytic activity">
    <reaction evidence="1">
        <text>L-homoserine + ATP = O-phospho-L-homoserine + ADP + H(+)</text>
        <dbReference type="Rhea" id="RHEA:13985"/>
        <dbReference type="ChEBI" id="CHEBI:15378"/>
        <dbReference type="ChEBI" id="CHEBI:30616"/>
        <dbReference type="ChEBI" id="CHEBI:57476"/>
        <dbReference type="ChEBI" id="CHEBI:57590"/>
        <dbReference type="ChEBI" id="CHEBI:456216"/>
        <dbReference type="EC" id="2.7.1.39"/>
    </reaction>
</comment>
<comment type="pathway">
    <text evidence="1">Amino-acid biosynthesis; L-threonine biosynthesis; L-threonine from L-aspartate: step 4/5.</text>
</comment>
<comment type="subcellular location">
    <subcellularLocation>
        <location evidence="1">Cytoplasm</location>
    </subcellularLocation>
</comment>
<comment type="similarity">
    <text evidence="1">Belongs to the GHMP kinase family. Homoserine kinase subfamily.</text>
</comment>
<gene>
    <name evidence="1" type="primary">thrB</name>
    <name type="ordered locus">Acid_0902</name>
</gene>
<name>KHSE_SOLUE</name>